<proteinExistence type="evidence at transcript level"/>
<organism>
    <name type="scientific">Sus scrofa</name>
    <name type="common">Pig</name>
    <dbReference type="NCBI Taxonomy" id="9823"/>
    <lineage>
        <taxon>Eukaryota</taxon>
        <taxon>Metazoa</taxon>
        <taxon>Chordata</taxon>
        <taxon>Craniata</taxon>
        <taxon>Vertebrata</taxon>
        <taxon>Euteleostomi</taxon>
        <taxon>Mammalia</taxon>
        <taxon>Eutheria</taxon>
        <taxon>Laurasiatheria</taxon>
        <taxon>Artiodactyla</taxon>
        <taxon>Suina</taxon>
        <taxon>Suidae</taxon>
        <taxon>Sus</taxon>
    </lineage>
</organism>
<feature type="signal peptide" evidence="2">
    <location>
        <begin position="1"/>
        <end position="18"/>
    </location>
</feature>
<feature type="propeptide" id="PRO_0000321575" evidence="1">
    <location>
        <begin position="19"/>
        <end position="138"/>
    </location>
</feature>
<feature type="chain" id="PRO_0000321576" description="Neurotrophin-3">
    <location>
        <begin position="139"/>
        <end position="257"/>
    </location>
</feature>
<feature type="region of interest" description="Disordered" evidence="3">
    <location>
        <begin position="61"/>
        <end position="81"/>
    </location>
</feature>
<feature type="compositionally biased region" description="Basic and acidic residues" evidence="3">
    <location>
        <begin position="67"/>
        <end position="79"/>
    </location>
</feature>
<feature type="glycosylation site" description="N-linked (GlcNAc...) asparagine" evidence="2">
    <location>
        <position position="131"/>
    </location>
</feature>
<feature type="disulfide bond" evidence="1">
    <location>
        <begin position="152"/>
        <end position="217"/>
    </location>
</feature>
<feature type="disulfide bond" evidence="1">
    <location>
        <begin position="195"/>
        <end position="246"/>
    </location>
</feature>
<feature type="disulfide bond" evidence="1">
    <location>
        <begin position="205"/>
        <end position="248"/>
    </location>
</feature>
<sequence>MSILFYMIFLAYLRGIQGNSMDQRRLPEDSLNSLIIKLIQADILKNKLSKQMVDLQENYQSTLPKAEAPREPERGEPAKSEFQPVTAVGPEWLRHHRRYNSPRVLLSDSTPLEPPPLYLVEDYVGNPSVANRTARRKRYAEHKSHRGEYSVCDSESLWVTDKSSAIDIRGHQVTVLGEIKTGNSPVKQYFYETRCKEARPVKNGCRGIDDKHWNSQCKTSQTYFRALTSYNNKLVGWRWIRIDTSCVCALSRKIGRT</sequence>
<accession>Q06AV0</accession>
<keyword id="KW-0165">Cleavage on pair of basic residues</keyword>
<keyword id="KW-1015">Disulfide bond</keyword>
<keyword id="KW-0325">Glycoprotein</keyword>
<keyword id="KW-0339">Growth factor</keyword>
<keyword id="KW-1185">Reference proteome</keyword>
<keyword id="KW-0964">Secreted</keyword>
<keyword id="KW-0732">Signal</keyword>
<reference key="1">
    <citation type="submission" date="2006-08" db="EMBL/GenBank/DDBJ databases">
        <authorList>
            <person name="Liu G.Y."/>
        </authorList>
    </citation>
    <scope>NUCLEOTIDE SEQUENCE [LARGE SCALE MRNA]</scope>
</reference>
<comment type="function">
    <text>Seems to promote the survival of visceral and proprioceptive sensory neurons.</text>
</comment>
<comment type="subcellular location">
    <subcellularLocation>
        <location evidence="1">Secreted</location>
    </subcellularLocation>
</comment>
<comment type="similarity">
    <text evidence="4">Belongs to the NGF-beta family.</text>
</comment>
<gene>
    <name type="primary">NTF3</name>
</gene>
<protein>
    <recommendedName>
        <fullName>Neurotrophin-3</fullName>
        <shortName>NT-3</shortName>
    </recommendedName>
</protein>
<dbReference type="EMBL" id="DQ917625">
    <property type="protein sequence ID" value="ABI97170.1"/>
    <property type="molecule type" value="mRNA"/>
</dbReference>
<dbReference type="RefSeq" id="NP_001116624.1">
    <property type="nucleotide sequence ID" value="NM_001123152.1"/>
</dbReference>
<dbReference type="SMR" id="Q06AV0"/>
<dbReference type="FunCoup" id="Q06AV0">
    <property type="interactions" value="366"/>
</dbReference>
<dbReference type="STRING" id="9823.ENSSSCP00000062768"/>
<dbReference type="GlyCosmos" id="Q06AV0">
    <property type="glycosylation" value="1 site, No reported glycans"/>
</dbReference>
<dbReference type="GlyGen" id="Q06AV0">
    <property type="glycosylation" value="1 site"/>
</dbReference>
<dbReference type="PaxDb" id="9823-ENSSSCP00000000761"/>
<dbReference type="GeneID" id="100144493"/>
<dbReference type="KEGG" id="ssc:100144493"/>
<dbReference type="CTD" id="4908"/>
<dbReference type="eggNOG" id="ENOG502R4FK">
    <property type="taxonomic scope" value="Eukaryota"/>
</dbReference>
<dbReference type="InParanoid" id="Q06AV0"/>
<dbReference type="OrthoDB" id="6491780at2759"/>
<dbReference type="Proteomes" id="UP000008227">
    <property type="component" value="Unplaced"/>
</dbReference>
<dbReference type="Proteomes" id="UP000314985">
    <property type="component" value="Unplaced"/>
</dbReference>
<dbReference type="Proteomes" id="UP000694570">
    <property type="component" value="Unplaced"/>
</dbReference>
<dbReference type="Proteomes" id="UP000694571">
    <property type="component" value="Unplaced"/>
</dbReference>
<dbReference type="Proteomes" id="UP000694720">
    <property type="component" value="Unplaced"/>
</dbReference>
<dbReference type="Proteomes" id="UP000694722">
    <property type="component" value="Unplaced"/>
</dbReference>
<dbReference type="Proteomes" id="UP000694723">
    <property type="component" value="Unplaced"/>
</dbReference>
<dbReference type="Proteomes" id="UP000694724">
    <property type="component" value="Unplaced"/>
</dbReference>
<dbReference type="Proteomes" id="UP000694725">
    <property type="component" value="Unplaced"/>
</dbReference>
<dbReference type="Proteomes" id="UP000694726">
    <property type="component" value="Unplaced"/>
</dbReference>
<dbReference type="Proteomes" id="UP000694727">
    <property type="component" value="Unplaced"/>
</dbReference>
<dbReference type="Proteomes" id="UP000694728">
    <property type="component" value="Unplaced"/>
</dbReference>
<dbReference type="GO" id="GO:0030424">
    <property type="term" value="C:axon"/>
    <property type="evidence" value="ECO:0000318"/>
    <property type="project" value="GO_Central"/>
</dbReference>
<dbReference type="GO" id="GO:0030425">
    <property type="term" value="C:dendrite"/>
    <property type="evidence" value="ECO:0000318"/>
    <property type="project" value="GO_Central"/>
</dbReference>
<dbReference type="GO" id="GO:0005615">
    <property type="term" value="C:extracellular space"/>
    <property type="evidence" value="ECO:0000318"/>
    <property type="project" value="GO_Central"/>
</dbReference>
<dbReference type="GO" id="GO:0008021">
    <property type="term" value="C:synaptic vesicle"/>
    <property type="evidence" value="ECO:0000318"/>
    <property type="project" value="GO_Central"/>
</dbReference>
<dbReference type="GO" id="GO:0008083">
    <property type="term" value="F:growth factor activity"/>
    <property type="evidence" value="ECO:0000318"/>
    <property type="project" value="GO_Central"/>
</dbReference>
<dbReference type="GO" id="GO:0005163">
    <property type="term" value="F:nerve growth factor receptor binding"/>
    <property type="evidence" value="ECO:0000318"/>
    <property type="project" value="GO_Central"/>
</dbReference>
<dbReference type="GO" id="GO:0007169">
    <property type="term" value="P:cell surface receptor protein tyrosine kinase signaling pathway"/>
    <property type="evidence" value="ECO:0000318"/>
    <property type="project" value="GO_Central"/>
</dbReference>
<dbReference type="GO" id="GO:0050804">
    <property type="term" value="P:modulation of chemical synaptic transmission"/>
    <property type="evidence" value="ECO:0000318"/>
    <property type="project" value="GO_Central"/>
</dbReference>
<dbReference type="GO" id="GO:0043524">
    <property type="term" value="P:negative regulation of neuron apoptotic process"/>
    <property type="evidence" value="ECO:0000318"/>
    <property type="project" value="GO_Central"/>
</dbReference>
<dbReference type="GO" id="GO:0021675">
    <property type="term" value="P:nerve development"/>
    <property type="evidence" value="ECO:0000318"/>
    <property type="project" value="GO_Central"/>
</dbReference>
<dbReference type="GO" id="GO:0038180">
    <property type="term" value="P:nerve growth factor signaling pathway"/>
    <property type="evidence" value="ECO:0000318"/>
    <property type="project" value="GO_Central"/>
</dbReference>
<dbReference type="GO" id="GO:0048812">
    <property type="term" value="P:neuron projection morphogenesis"/>
    <property type="evidence" value="ECO:0000318"/>
    <property type="project" value="GO_Central"/>
</dbReference>
<dbReference type="FunFam" id="2.10.90.10:FF:000002">
    <property type="entry name" value="Brain-derived neurotrophic factor"/>
    <property type="match status" value="1"/>
</dbReference>
<dbReference type="Gene3D" id="2.10.90.10">
    <property type="entry name" value="Cystine-knot cytokines"/>
    <property type="match status" value="1"/>
</dbReference>
<dbReference type="InterPro" id="IPR029034">
    <property type="entry name" value="Cystine-knot_cytokine"/>
</dbReference>
<dbReference type="InterPro" id="IPR020408">
    <property type="entry name" value="Nerve_growth_factor-like"/>
</dbReference>
<dbReference type="InterPro" id="IPR002072">
    <property type="entry name" value="Nerve_growth_factor-rel"/>
</dbReference>
<dbReference type="InterPro" id="IPR019846">
    <property type="entry name" value="Nerve_growth_factor_CS"/>
</dbReference>
<dbReference type="InterPro" id="IPR015578">
    <property type="entry name" value="Neurotrophin-3"/>
</dbReference>
<dbReference type="InterPro" id="IPR045815">
    <property type="entry name" value="NTF3_N"/>
</dbReference>
<dbReference type="PANTHER" id="PTHR11589">
    <property type="entry name" value="NERVE GROWTH FACTOR NGF -RELATED"/>
    <property type="match status" value="1"/>
</dbReference>
<dbReference type="PANTHER" id="PTHR11589:SF4">
    <property type="entry name" value="NEUROTROPHIN-3"/>
    <property type="match status" value="1"/>
</dbReference>
<dbReference type="Pfam" id="PF00243">
    <property type="entry name" value="NGF"/>
    <property type="match status" value="1"/>
</dbReference>
<dbReference type="Pfam" id="PF19338">
    <property type="entry name" value="NTF3_N"/>
    <property type="match status" value="1"/>
</dbReference>
<dbReference type="PIRSF" id="PIRSF001789">
    <property type="entry name" value="NGF"/>
    <property type="match status" value="1"/>
</dbReference>
<dbReference type="PRINTS" id="PR01914">
    <property type="entry name" value="NEUROTROPHN3"/>
</dbReference>
<dbReference type="PRINTS" id="PR00268">
    <property type="entry name" value="NGF"/>
</dbReference>
<dbReference type="SMART" id="SM00140">
    <property type="entry name" value="NGF"/>
    <property type="match status" value="1"/>
</dbReference>
<dbReference type="SUPFAM" id="SSF57501">
    <property type="entry name" value="Cystine-knot cytokines"/>
    <property type="match status" value="1"/>
</dbReference>
<dbReference type="PROSITE" id="PS00248">
    <property type="entry name" value="NGF_1"/>
    <property type="match status" value="1"/>
</dbReference>
<dbReference type="PROSITE" id="PS50270">
    <property type="entry name" value="NGF_2"/>
    <property type="match status" value="1"/>
</dbReference>
<name>NTF3_PIG</name>
<evidence type="ECO:0000250" key="1"/>
<evidence type="ECO:0000255" key="2"/>
<evidence type="ECO:0000256" key="3">
    <source>
        <dbReference type="SAM" id="MobiDB-lite"/>
    </source>
</evidence>
<evidence type="ECO:0000305" key="4"/>